<gene>
    <name type="ordered locus">MAP_0532</name>
</gene>
<evidence type="ECO:0000255" key="1">
    <source>
        <dbReference type="HAMAP-Rule" id="MF_01657"/>
    </source>
</evidence>
<organism>
    <name type="scientific">Mycolicibacterium paratuberculosis (strain ATCC BAA-968 / K-10)</name>
    <name type="common">Mycobacterium paratuberculosis</name>
    <dbReference type="NCBI Taxonomy" id="262316"/>
    <lineage>
        <taxon>Bacteria</taxon>
        <taxon>Bacillati</taxon>
        <taxon>Actinomycetota</taxon>
        <taxon>Actinomycetes</taxon>
        <taxon>Mycobacteriales</taxon>
        <taxon>Mycobacteriaceae</taxon>
        <taxon>Mycobacterium</taxon>
        <taxon>Mycobacterium avium complex (MAC)</taxon>
    </lineage>
</organism>
<accession>Q743Q9</accession>
<feature type="chain" id="PRO_0000387679" description="Acetaldehyde dehydrogenase">
    <location>
        <begin position="1"/>
        <end position="305"/>
    </location>
</feature>
<feature type="active site" description="Acyl-thioester intermediate" evidence="1">
    <location>
        <position position="127"/>
    </location>
</feature>
<feature type="binding site" evidence="1">
    <location>
        <begin position="12"/>
        <end position="15"/>
    </location>
    <ligand>
        <name>NAD(+)</name>
        <dbReference type="ChEBI" id="CHEBI:57540"/>
    </ligand>
</feature>
<feature type="binding site" evidence="1">
    <location>
        <begin position="158"/>
        <end position="166"/>
    </location>
    <ligand>
        <name>NAD(+)</name>
        <dbReference type="ChEBI" id="CHEBI:57540"/>
    </ligand>
</feature>
<feature type="binding site" evidence="1">
    <location>
        <position position="277"/>
    </location>
    <ligand>
        <name>NAD(+)</name>
        <dbReference type="ChEBI" id="CHEBI:57540"/>
    </ligand>
</feature>
<protein>
    <recommendedName>
        <fullName evidence="1">Acetaldehyde dehydrogenase</fullName>
        <ecNumber evidence="1">1.2.1.10</ecNumber>
    </recommendedName>
    <alternativeName>
        <fullName evidence="1">Acetaldehyde dehydrogenase [acetylating]</fullName>
    </alternativeName>
</protein>
<reference key="1">
    <citation type="journal article" date="2005" name="Proc. Natl. Acad. Sci. U.S.A.">
        <title>The complete genome sequence of Mycobacterium avium subspecies paratuberculosis.</title>
        <authorList>
            <person name="Li L."/>
            <person name="Bannantine J.P."/>
            <person name="Zhang Q."/>
            <person name="Amonsin A."/>
            <person name="May B.J."/>
            <person name="Alt D."/>
            <person name="Banerji N."/>
            <person name="Kanjilal S."/>
            <person name="Kapur V."/>
        </authorList>
    </citation>
    <scope>NUCLEOTIDE SEQUENCE [LARGE SCALE GENOMIC DNA]</scope>
    <source>
        <strain>ATCC BAA-968 / K-10</strain>
    </source>
</reference>
<name>ACDH_MYCPA</name>
<sequence length="305" mass="32339">MPTKAKVAIVGSGNISTDLLYKLLRSDWLEPRWMVGIDPQSEGLARARKLGLETTHEGVDWLLAQPEKPDLVFEATSAYVHRDAAPKYEAAGIRAIDLTPAAVGPAVIPPANLRQHLDAPNVNMITCGGQATIPIVFAVSRVVEVPYAEIVASVASVSAGPGTRANIDEFTKTTSRGVETIGGAKRGKAIIILNPADPPMIMRDTIFCAIPEDADRDAIAQSIHDVVKEVQTYVPGYRLLNEPQFDEPSLNSGGQAVVTTFVEVEGAGDYLPPYAGNLDIMTAAATKVGEEIAKETLATTAGGAQ</sequence>
<dbReference type="EC" id="1.2.1.10" evidence="1"/>
<dbReference type="EMBL" id="AE016958">
    <property type="protein sequence ID" value="AAS02849.1"/>
    <property type="molecule type" value="Genomic_DNA"/>
</dbReference>
<dbReference type="RefSeq" id="WP_003875690.1">
    <property type="nucleotide sequence ID" value="NZ_CP106873.1"/>
</dbReference>
<dbReference type="SMR" id="Q743Q9"/>
<dbReference type="STRING" id="262316.MAP_0532"/>
<dbReference type="KEGG" id="mpa:MAP_0532"/>
<dbReference type="PATRIC" id="fig|262316.17.peg.563"/>
<dbReference type="eggNOG" id="COG4569">
    <property type="taxonomic scope" value="Bacteria"/>
</dbReference>
<dbReference type="HOGENOM" id="CLU_062208_0_0_11"/>
<dbReference type="Proteomes" id="UP000000580">
    <property type="component" value="Chromosome"/>
</dbReference>
<dbReference type="GO" id="GO:0008774">
    <property type="term" value="F:acetaldehyde dehydrogenase (acetylating) activity"/>
    <property type="evidence" value="ECO:0007669"/>
    <property type="project" value="UniProtKB-UniRule"/>
</dbReference>
<dbReference type="GO" id="GO:0051287">
    <property type="term" value="F:NAD binding"/>
    <property type="evidence" value="ECO:0007669"/>
    <property type="project" value="UniProtKB-UniRule"/>
</dbReference>
<dbReference type="GO" id="GO:0009056">
    <property type="term" value="P:catabolic process"/>
    <property type="evidence" value="ECO:0007669"/>
    <property type="project" value="UniProtKB-KW"/>
</dbReference>
<dbReference type="CDD" id="cd23933">
    <property type="entry name" value="ALDH_C"/>
    <property type="match status" value="1"/>
</dbReference>
<dbReference type="Gene3D" id="3.30.360.10">
    <property type="entry name" value="Dihydrodipicolinate Reductase, domain 2"/>
    <property type="match status" value="1"/>
</dbReference>
<dbReference type="Gene3D" id="3.40.50.720">
    <property type="entry name" value="NAD(P)-binding Rossmann-like Domain"/>
    <property type="match status" value="1"/>
</dbReference>
<dbReference type="HAMAP" id="MF_01657">
    <property type="entry name" value="Ac_ald_DH_ac"/>
    <property type="match status" value="1"/>
</dbReference>
<dbReference type="InterPro" id="IPR003361">
    <property type="entry name" value="Acetaldehyde_dehydrogenase"/>
</dbReference>
<dbReference type="InterPro" id="IPR015426">
    <property type="entry name" value="Acetylaldehyde_DH_C"/>
</dbReference>
<dbReference type="InterPro" id="IPR036291">
    <property type="entry name" value="NAD(P)-bd_dom_sf"/>
</dbReference>
<dbReference type="InterPro" id="IPR000534">
    <property type="entry name" value="Semialdehyde_DH_NAD-bd"/>
</dbReference>
<dbReference type="NCBIfam" id="TIGR03215">
    <property type="entry name" value="ac_ald_DH_ac"/>
    <property type="match status" value="1"/>
</dbReference>
<dbReference type="NCBIfam" id="NF006157">
    <property type="entry name" value="PRK08300.1"/>
    <property type="match status" value="1"/>
</dbReference>
<dbReference type="Pfam" id="PF09290">
    <property type="entry name" value="AcetDehyd-dimer"/>
    <property type="match status" value="1"/>
</dbReference>
<dbReference type="PIRSF" id="PIRSF015689">
    <property type="entry name" value="Actaldh_dh_actl"/>
    <property type="match status" value="1"/>
</dbReference>
<dbReference type="SMART" id="SM00859">
    <property type="entry name" value="Semialdhyde_dh"/>
    <property type="match status" value="1"/>
</dbReference>
<dbReference type="SUPFAM" id="SSF55347">
    <property type="entry name" value="Glyceraldehyde-3-phosphate dehydrogenase-like, C-terminal domain"/>
    <property type="match status" value="1"/>
</dbReference>
<dbReference type="SUPFAM" id="SSF51735">
    <property type="entry name" value="NAD(P)-binding Rossmann-fold domains"/>
    <property type="match status" value="1"/>
</dbReference>
<comment type="catalytic activity">
    <reaction evidence="1">
        <text>acetaldehyde + NAD(+) + CoA = acetyl-CoA + NADH + H(+)</text>
        <dbReference type="Rhea" id="RHEA:23288"/>
        <dbReference type="ChEBI" id="CHEBI:15343"/>
        <dbReference type="ChEBI" id="CHEBI:15378"/>
        <dbReference type="ChEBI" id="CHEBI:57287"/>
        <dbReference type="ChEBI" id="CHEBI:57288"/>
        <dbReference type="ChEBI" id="CHEBI:57540"/>
        <dbReference type="ChEBI" id="CHEBI:57945"/>
        <dbReference type="EC" id="1.2.1.10"/>
    </reaction>
</comment>
<comment type="similarity">
    <text evidence="1">Belongs to the acetaldehyde dehydrogenase family.</text>
</comment>
<proteinExistence type="inferred from homology"/>
<keyword id="KW-0058">Aromatic hydrocarbons catabolism</keyword>
<keyword id="KW-0520">NAD</keyword>
<keyword id="KW-0560">Oxidoreductase</keyword>
<keyword id="KW-1185">Reference proteome</keyword>